<protein>
    <recommendedName>
        <fullName>Nucleolar protein 9</fullName>
    </recommendedName>
</protein>
<reference key="1">
    <citation type="submission" date="2002-11" db="EMBL/GenBank/DDBJ databases">
        <title>The nucleotide sequence of a long cDNA clone isolated from human.</title>
        <authorList>
            <person name="Nagase T."/>
            <person name="Kikuno R."/>
            <person name="Ohara O."/>
        </authorList>
    </citation>
    <scope>NUCLEOTIDE SEQUENCE [LARGE SCALE MRNA] (ISOFORM 1)</scope>
    <source>
        <tissue>Brain</tissue>
    </source>
</reference>
<reference key="2">
    <citation type="submission" date="2003-02" db="EMBL/GenBank/DDBJ databases">
        <title>Full-length cDNA libraries and normalization.</title>
        <authorList>
            <person name="Li W.B."/>
            <person name="Gruber C."/>
            <person name="Jessee J."/>
            <person name="Polayes D."/>
        </authorList>
    </citation>
    <scope>NUCLEOTIDE SEQUENCE [LARGE SCALE MRNA] (ISOFORM 1)</scope>
    <source>
        <tissue>Placenta</tissue>
    </source>
</reference>
<reference key="3">
    <citation type="journal article" date="2003" name="Nature">
        <title>The DNA sequence and analysis of human chromosome 14.</title>
        <authorList>
            <person name="Heilig R."/>
            <person name="Eckenberg R."/>
            <person name="Petit J.-L."/>
            <person name="Fonknechten N."/>
            <person name="Da Silva C."/>
            <person name="Cattolico L."/>
            <person name="Levy M."/>
            <person name="Barbe V."/>
            <person name="De Berardinis V."/>
            <person name="Ureta-Vidal A."/>
            <person name="Pelletier E."/>
            <person name="Vico V."/>
            <person name="Anthouard V."/>
            <person name="Rowen L."/>
            <person name="Madan A."/>
            <person name="Qin S."/>
            <person name="Sun H."/>
            <person name="Du H."/>
            <person name="Pepin K."/>
            <person name="Artiguenave F."/>
            <person name="Robert C."/>
            <person name="Cruaud C."/>
            <person name="Bruels T."/>
            <person name="Jaillon O."/>
            <person name="Friedlander L."/>
            <person name="Samson G."/>
            <person name="Brottier P."/>
            <person name="Cure S."/>
            <person name="Segurens B."/>
            <person name="Aniere F."/>
            <person name="Samain S."/>
            <person name="Crespeau H."/>
            <person name="Abbasi N."/>
            <person name="Aiach N."/>
            <person name="Boscus D."/>
            <person name="Dickhoff R."/>
            <person name="Dors M."/>
            <person name="Dubois I."/>
            <person name="Friedman C."/>
            <person name="Gouyvenoux M."/>
            <person name="James R."/>
            <person name="Madan A."/>
            <person name="Mairey-Estrada B."/>
            <person name="Mangenot S."/>
            <person name="Martins N."/>
            <person name="Menard M."/>
            <person name="Oztas S."/>
            <person name="Ratcliffe A."/>
            <person name="Shaffer T."/>
            <person name="Trask B."/>
            <person name="Vacherie B."/>
            <person name="Bellemere C."/>
            <person name="Belser C."/>
            <person name="Besnard-Gonnet M."/>
            <person name="Bartol-Mavel D."/>
            <person name="Boutard M."/>
            <person name="Briez-Silla S."/>
            <person name="Combette S."/>
            <person name="Dufosse-Laurent V."/>
            <person name="Ferron C."/>
            <person name="Lechaplais C."/>
            <person name="Louesse C."/>
            <person name="Muselet D."/>
            <person name="Magdelenat G."/>
            <person name="Pateau E."/>
            <person name="Petit E."/>
            <person name="Sirvain-Trukniewicz P."/>
            <person name="Trybou A."/>
            <person name="Vega-Czarny N."/>
            <person name="Bataille E."/>
            <person name="Bluet E."/>
            <person name="Bordelais I."/>
            <person name="Dubois M."/>
            <person name="Dumont C."/>
            <person name="Guerin T."/>
            <person name="Haffray S."/>
            <person name="Hammadi R."/>
            <person name="Muanga J."/>
            <person name="Pellouin V."/>
            <person name="Robert D."/>
            <person name="Wunderle E."/>
            <person name="Gauguet G."/>
            <person name="Roy A."/>
            <person name="Sainte-Marthe L."/>
            <person name="Verdier J."/>
            <person name="Verdier-Discala C."/>
            <person name="Hillier L.W."/>
            <person name="Fulton L."/>
            <person name="McPherson J."/>
            <person name="Matsuda F."/>
            <person name="Wilson R."/>
            <person name="Scarpelli C."/>
            <person name="Gyapay G."/>
            <person name="Wincker P."/>
            <person name="Saurin W."/>
            <person name="Quetier F."/>
            <person name="Waterston R."/>
            <person name="Hood L."/>
            <person name="Weissenbach J."/>
        </authorList>
    </citation>
    <scope>NUCLEOTIDE SEQUENCE [LARGE SCALE GENOMIC DNA]</scope>
</reference>
<reference key="4">
    <citation type="journal article" date="2004" name="Genome Res.">
        <title>The status, quality, and expansion of the NIH full-length cDNA project: the Mammalian Gene Collection (MGC).</title>
        <authorList>
            <consortium name="The MGC Project Team"/>
        </authorList>
    </citation>
    <scope>NUCLEOTIDE SEQUENCE [LARGE SCALE MRNA] (ISOFORM 2)</scope>
    <scope>VARIANT ASN-308</scope>
    <source>
        <tissue>Lung</tissue>
    </source>
</reference>
<reference key="5">
    <citation type="journal article" date="2011" name="BMC Syst. Biol.">
        <title>Initial characterization of the human central proteome.</title>
        <authorList>
            <person name="Burkard T.R."/>
            <person name="Planyavsky M."/>
            <person name="Kaupe I."/>
            <person name="Breitwieser F.P."/>
            <person name="Buerckstuemmer T."/>
            <person name="Bennett K.L."/>
            <person name="Superti-Furga G."/>
            <person name="Colinge J."/>
        </authorList>
    </citation>
    <scope>IDENTIFICATION BY MASS SPECTROMETRY [LARGE SCALE ANALYSIS]</scope>
</reference>
<reference key="6">
    <citation type="journal article" date="2011" name="Sci. Signal.">
        <title>System-wide temporal characterization of the proteome and phosphoproteome of human embryonic stem cell differentiation.</title>
        <authorList>
            <person name="Rigbolt K.T."/>
            <person name="Prokhorova T.A."/>
            <person name="Akimov V."/>
            <person name="Henningsen J."/>
            <person name="Johansen P.T."/>
            <person name="Kratchmarova I."/>
            <person name="Kassem M."/>
            <person name="Mann M."/>
            <person name="Olsen J.V."/>
            <person name="Blagoev B."/>
        </authorList>
    </citation>
    <scope>PHOSPHORYLATION [LARGE SCALE ANALYSIS] AT SER-7</scope>
    <scope>IDENTIFICATION BY MASS SPECTROMETRY [LARGE SCALE ANALYSIS]</scope>
</reference>
<reference key="7">
    <citation type="journal article" date="2006" name="Science">
        <title>The consensus coding sequences of human breast and colorectal cancers.</title>
        <authorList>
            <person name="Sjoeblom T."/>
            <person name="Jones S."/>
            <person name="Wood L.D."/>
            <person name="Parsons D.W."/>
            <person name="Lin J."/>
            <person name="Barber T.D."/>
            <person name="Mandelker D."/>
            <person name="Leary R.J."/>
            <person name="Ptak J."/>
            <person name="Silliman N."/>
            <person name="Szabo S."/>
            <person name="Buckhaults P."/>
            <person name="Farrell C."/>
            <person name="Meeh P."/>
            <person name="Markowitz S.D."/>
            <person name="Willis J."/>
            <person name="Dawson D."/>
            <person name="Willson J.K.V."/>
            <person name="Gazdar A.F."/>
            <person name="Hartigan J."/>
            <person name="Wu L."/>
            <person name="Liu C."/>
            <person name="Parmigiani G."/>
            <person name="Park B.H."/>
            <person name="Bachman K.E."/>
            <person name="Papadopoulos N."/>
            <person name="Vogelstein B."/>
            <person name="Kinzler K.W."/>
            <person name="Velculescu V.E."/>
        </authorList>
    </citation>
    <scope>VARIANTS [LARGE SCALE ANALYSIS] TYR-497 AND GLN-626</scope>
</reference>
<proteinExistence type="evidence at protein level"/>
<evidence type="ECO:0000256" key="1">
    <source>
        <dbReference type="SAM" id="MobiDB-lite"/>
    </source>
</evidence>
<evidence type="ECO:0000269" key="2">
    <source>
    </source>
</evidence>
<evidence type="ECO:0000269" key="3">
    <source>
    </source>
</evidence>
<evidence type="ECO:0000303" key="4">
    <source>
    </source>
</evidence>
<evidence type="ECO:0000305" key="5"/>
<evidence type="ECO:0007744" key="6">
    <source>
    </source>
</evidence>
<keyword id="KW-0025">Alternative splicing</keyword>
<keyword id="KW-0597">Phosphoprotein</keyword>
<keyword id="KW-1267">Proteomics identification</keyword>
<keyword id="KW-1185">Reference proteome</keyword>
<keyword id="KW-0677">Repeat</keyword>
<keyword id="KW-0694">RNA-binding</keyword>
<feature type="chain" id="PRO_0000075927" description="Nucleolar protein 9">
    <location>
        <begin position="1"/>
        <end position="636"/>
    </location>
</feature>
<feature type="repeat" description="Pumilio 1">
    <location>
        <begin position="92"/>
        <end position="123"/>
    </location>
</feature>
<feature type="repeat" description="Pumilio 2">
    <location>
        <begin position="189"/>
        <end position="223"/>
    </location>
</feature>
<feature type="repeat" description="Pumilio 3">
    <location>
        <begin position="313"/>
        <end position="348"/>
    </location>
</feature>
<feature type="repeat" description="Pumilio 4">
    <location>
        <begin position="351"/>
        <end position="386"/>
    </location>
</feature>
<feature type="repeat" description="Pumilio 5">
    <location>
        <begin position="509"/>
        <end position="544"/>
    </location>
</feature>
<feature type="repeat" description="Pumilio 6">
    <location>
        <begin position="547"/>
        <end position="581"/>
    </location>
</feature>
<feature type="region of interest" description="Disordered" evidence="1">
    <location>
        <begin position="1"/>
        <end position="59"/>
    </location>
</feature>
<feature type="region of interest" description="Disordered" evidence="1">
    <location>
        <begin position="222"/>
        <end position="241"/>
    </location>
</feature>
<feature type="compositionally biased region" description="Basic and acidic residues" evidence="1">
    <location>
        <begin position="45"/>
        <end position="57"/>
    </location>
</feature>
<feature type="compositionally biased region" description="Polar residues" evidence="1">
    <location>
        <begin position="228"/>
        <end position="238"/>
    </location>
</feature>
<feature type="modified residue" description="Phosphoserine" evidence="6">
    <location>
        <position position="7"/>
    </location>
</feature>
<feature type="splice variant" id="VSP_055693" description="In isoform 2." evidence="4">
    <original>SPAGSHVLDAILTSPS</original>
    <variation>RPGRKLLLSLGSRTRS</variation>
    <location>
        <begin position="520"/>
        <end position="535"/>
    </location>
</feature>
<feature type="splice variant" id="VSP_055694" description="In isoform 2." evidence="4">
    <location>
        <begin position="536"/>
        <end position="636"/>
    </location>
</feature>
<feature type="sequence variant" id="VAR_051612" description="In dbSNP:rs11848295.">
    <original>P</original>
    <variation>S</variation>
    <location>
        <position position="51"/>
    </location>
</feature>
<feature type="sequence variant" id="VAR_024600" description="In dbSNP:rs4280164." evidence="2">
    <original>S</original>
    <variation>N</variation>
    <location>
        <position position="308"/>
    </location>
</feature>
<feature type="sequence variant" id="VAR_036456" description="In a breast cancer sample; somatic mutation." evidence="3">
    <original>S</original>
    <variation>Y</variation>
    <location>
        <position position="497"/>
    </location>
</feature>
<feature type="sequence variant" id="VAR_036457" description="In a breast cancer sample; somatic mutation; dbSNP:rs374412139." evidence="3">
    <original>R</original>
    <variation>Q</variation>
    <location>
        <position position="626"/>
    </location>
</feature>
<feature type="sequence conflict" description="In Ref. 4; AAH25332." evidence="5" ref="4">
    <original>A</original>
    <variation>AE</variation>
    <location>
        <position position="161"/>
    </location>
</feature>
<sequence length="636" mass="69438">MGQGPRSPHKVGRRFPAGGKRGRGAKGSGRPLPGRKRQPWPPPDGRSEPAPDSHPHLSPEALGYFRRALSALKEAPETGEERDLMVHNIMKEVETQALALSTNRTGSEMLQELLGFSPLKPLCRVWAALRSNLRTVACHRCGVHVLQSALLQLPRLLGSAAEEEEEEEEDGKDGPTETLEELVLGLAAEVCDDFLVYCGDTHGSFVVRTLLQVLGGTILESERARPRGSQSSEAQKTPAQECKPADFEVPETFLNRLQDLSSSFLKDIAVFITDKISSFCLQVALQVLHRKLPQFCAHLCNAVIGYLSTRGSSVDGSPLLLFLRDQTSSRLLEQVLLVLEPPRLQSLFEEHLQGQLQTLAAHPIANFPLQRLLDAVTTPELLSPVFEELSPVLEAVLAQGHPGVVIALVGACRRVGAYQAKVLQLLLEAFHCAEPSSRQVACVPLFATLMAYEVYYGLTEEEGAVPAEHQVAMAAARALGDVTVLGSLLLQHLLHFSTPGLVLRSLGALTGPQLLSLAQSPAGSHVLDAILTSPSVTRKLRRRVLQNLKGQYVALACSRHGSRVLDAIWSGAALRARKEIAAELGEQNQELIRDPFGHHVARNVALTTFLKRREAWEQQQGAVAKRRRALNSILED</sequence>
<dbReference type="EMBL" id="AB095941">
    <property type="protein sequence ID" value="BAC23117.1"/>
    <property type="status" value="ALT_INIT"/>
    <property type="molecule type" value="mRNA"/>
</dbReference>
<dbReference type="EMBL" id="BX248018">
    <property type="protein sequence ID" value="CAD62343.1"/>
    <property type="molecule type" value="mRNA"/>
</dbReference>
<dbReference type="EMBL" id="AL096870">
    <property type="status" value="NOT_ANNOTATED_CDS"/>
    <property type="molecule type" value="Genomic_DNA"/>
</dbReference>
<dbReference type="EMBL" id="BC025332">
    <property type="protein sequence ID" value="AAH25332.1"/>
    <property type="molecule type" value="mRNA"/>
</dbReference>
<dbReference type="CCDS" id="CCDS66616.1">
    <molecule id="Q86U38-2"/>
</dbReference>
<dbReference type="CCDS" id="CCDS9624.1">
    <molecule id="Q86U38-1"/>
</dbReference>
<dbReference type="RefSeq" id="NP_001273296.1">
    <molecule id="Q86U38-2"/>
    <property type="nucleotide sequence ID" value="NM_001286367.2"/>
</dbReference>
<dbReference type="RefSeq" id="NP_777573.1">
    <molecule id="Q86U38-1"/>
    <property type="nucleotide sequence ID" value="NM_174913.3"/>
</dbReference>
<dbReference type="SMR" id="Q86U38"/>
<dbReference type="BioGRID" id="127790">
    <property type="interactions" value="182"/>
</dbReference>
<dbReference type="FunCoup" id="Q86U38">
    <property type="interactions" value="2158"/>
</dbReference>
<dbReference type="IntAct" id="Q86U38">
    <property type="interactions" value="95"/>
</dbReference>
<dbReference type="MINT" id="Q86U38"/>
<dbReference type="STRING" id="9606.ENSP00000267425"/>
<dbReference type="GlyGen" id="Q86U38">
    <property type="glycosylation" value="1 site, 1 O-linked glycan (1 site)"/>
</dbReference>
<dbReference type="iPTMnet" id="Q86U38"/>
<dbReference type="PhosphoSitePlus" id="Q86U38"/>
<dbReference type="SwissPalm" id="Q86U38"/>
<dbReference type="BioMuta" id="NOP9"/>
<dbReference type="DMDM" id="34921618"/>
<dbReference type="jPOST" id="Q86U38"/>
<dbReference type="MassIVE" id="Q86U38"/>
<dbReference type="PaxDb" id="9606-ENSP00000267425"/>
<dbReference type="PeptideAtlas" id="Q86U38"/>
<dbReference type="ProteomicsDB" id="2380"/>
<dbReference type="ProteomicsDB" id="69765">
    <molecule id="Q86U38-1"/>
</dbReference>
<dbReference type="Pumba" id="Q86U38"/>
<dbReference type="Antibodypedia" id="74">
    <property type="antibodies" value="34 antibodies from 12 providers"/>
</dbReference>
<dbReference type="DNASU" id="161424"/>
<dbReference type="Ensembl" id="ENST00000267425.8">
    <molecule id="Q86U38-1"/>
    <property type="protein sequence ID" value="ENSP00000267425.3"/>
    <property type="gene ID" value="ENSG00000196943.14"/>
</dbReference>
<dbReference type="Ensembl" id="ENST00000396802.7">
    <molecule id="Q86U38-2"/>
    <property type="protein sequence ID" value="ENSP00000380020.3"/>
    <property type="gene ID" value="ENSG00000196943.14"/>
</dbReference>
<dbReference type="Ensembl" id="ENST00000642262.1">
    <molecule id="Q86U38-2"/>
    <property type="protein sequence ID" value="ENSP00000493692.1"/>
    <property type="gene ID" value="ENSG00000285326.3"/>
</dbReference>
<dbReference type="Ensembl" id="ENST00000644840.2">
    <molecule id="Q86U38-1"/>
    <property type="protein sequence ID" value="ENSP00000495668.1"/>
    <property type="gene ID" value="ENSG00000285326.3"/>
</dbReference>
<dbReference type="GeneID" id="161424"/>
<dbReference type="KEGG" id="hsa:161424"/>
<dbReference type="MANE-Select" id="ENST00000267425.8">
    <property type="protein sequence ID" value="ENSP00000267425.3"/>
    <property type="RefSeq nucleotide sequence ID" value="NM_174913.3"/>
    <property type="RefSeq protein sequence ID" value="NP_777573.1"/>
</dbReference>
<dbReference type="UCSC" id="uc001wol.3">
    <molecule id="Q86U38-1"/>
    <property type="organism name" value="human"/>
</dbReference>
<dbReference type="AGR" id="HGNC:19826"/>
<dbReference type="CTD" id="161424"/>
<dbReference type="DisGeNET" id="161424"/>
<dbReference type="GeneCards" id="NOP9"/>
<dbReference type="HGNC" id="HGNC:19826">
    <property type="gene designation" value="NOP9"/>
</dbReference>
<dbReference type="HPA" id="ENSG00000196943">
    <property type="expression patterns" value="Low tissue specificity"/>
</dbReference>
<dbReference type="MIM" id="618308">
    <property type="type" value="gene"/>
</dbReference>
<dbReference type="neXtProt" id="NX_Q86U38"/>
<dbReference type="OpenTargets" id="ENSG00000196943"/>
<dbReference type="PharmGKB" id="PA134867241"/>
<dbReference type="VEuPathDB" id="HostDB:ENSG00000196943"/>
<dbReference type="eggNOG" id="KOG2188">
    <property type="taxonomic scope" value="Eukaryota"/>
</dbReference>
<dbReference type="GeneTree" id="ENSGT00390000004964"/>
<dbReference type="HOGENOM" id="CLU_029199_1_0_1"/>
<dbReference type="InParanoid" id="Q86U38"/>
<dbReference type="OMA" id="HHLVRNF"/>
<dbReference type="OrthoDB" id="9987665at2759"/>
<dbReference type="PAN-GO" id="Q86U38">
    <property type="GO annotations" value="8 GO annotations based on evolutionary models"/>
</dbReference>
<dbReference type="PhylomeDB" id="Q86U38"/>
<dbReference type="TreeFam" id="TF327254"/>
<dbReference type="PathwayCommons" id="Q86U38"/>
<dbReference type="SignaLink" id="Q86U38"/>
<dbReference type="BioGRID-ORCS" id="161424">
    <property type="hits" value="592 hits in 1160 CRISPR screens"/>
</dbReference>
<dbReference type="CD-CODE" id="91857CE7">
    <property type="entry name" value="Nucleolus"/>
</dbReference>
<dbReference type="ChiTaRS" id="NOP9">
    <property type="organism name" value="human"/>
</dbReference>
<dbReference type="GenomeRNAi" id="161424"/>
<dbReference type="Pharos" id="Q86U38">
    <property type="development level" value="Tdark"/>
</dbReference>
<dbReference type="PRO" id="PR:Q86U38"/>
<dbReference type="Proteomes" id="UP000005640">
    <property type="component" value="Chromosome 14"/>
</dbReference>
<dbReference type="RNAct" id="Q86U38">
    <property type="molecule type" value="protein"/>
</dbReference>
<dbReference type="Bgee" id="ENSG00000196943">
    <property type="expression patterns" value="Expressed in skeletal muscle tissue and 105 other cell types or tissues"/>
</dbReference>
<dbReference type="ExpressionAtlas" id="Q86U38">
    <property type="expression patterns" value="baseline and differential"/>
</dbReference>
<dbReference type="GO" id="GO:0030686">
    <property type="term" value="C:90S preribosome"/>
    <property type="evidence" value="ECO:0000318"/>
    <property type="project" value="GO_Central"/>
</dbReference>
<dbReference type="GO" id="GO:0005730">
    <property type="term" value="C:nucleolus"/>
    <property type="evidence" value="ECO:0000318"/>
    <property type="project" value="GO_Central"/>
</dbReference>
<dbReference type="GO" id="GO:0030688">
    <property type="term" value="C:preribosome, small subunit precursor"/>
    <property type="evidence" value="ECO:0000318"/>
    <property type="project" value="GO_Central"/>
</dbReference>
<dbReference type="GO" id="GO:0003723">
    <property type="term" value="F:RNA binding"/>
    <property type="evidence" value="ECO:0007005"/>
    <property type="project" value="UniProtKB"/>
</dbReference>
<dbReference type="GO" id="GO:0000480">
    <property type="term" value="P:endonucleolytic cleavage in 5'-ETS of tricistronic rRNA transcript (SSU-rRNA, 5.8S rRNA, LSU-rRNA)"/>
    <property type="evidence" value="ECO:0000318"/>
    <property type="project" value="GO_Central"/>
</dbReference>
<dbReference type="GO" id="GO:0000447">
    <property type="term" value="P:endonucleolytic cleavage in ITS1 to separate SSU-rRNA from 5.8S rRNA and LSU-rRNA from tricistronic rRNA transcript (SSU-rRNA, 5.8S rRNA, LSU-rRNA)"/>
    <property type="evidence" value="ECO:0000318"/>
    <property type="project" value="GO_Central"/>
</dbReference>
<dbReference type="GO" id="GO:0000472">
    <property type="term" value="P:endonucleolytic cleavage to generate mature 5'-end of SSU-rRNA from (SSU-rRNA, 5.8S rRNA, LSU-rRNA)"/>
    <property type="evidence" value="ECO:0000318"/>
    <property type="project" value="GO_Central"/>
</dbReference>
<dbReference type="GO" id="GO:0000056">
    <property type="term" value="P:ribosomal small subunit export from nucleus"/>
    <property type="evidence" value="ECO:0000318"/>
    <property type="project" value="GO_Central"/>
</dbReference>
<dbReference type="FunFam" id="1.25.10.10:FF:000309">
    <property type="entry name" value="NOP9 nucleolar protein"/>
    <property type="match status" value="1"/>
</dbReference>
<dbReference type="FunFam" id="1.25.10.10:FF:000441">
    <property type="entry name" value="NOP9 nucleolar protein"/>
    <property type="match status" value="1"/>
</dbReference>
<dbReference type="Gene3D" id="1.25.10.10">
    <property type="entry name" value="Leucine-rich Repeat Variant"/>
    <property type="match status" value="2"/>
</dbReference>
<dbReference type="InterPro" id="IPR011989">
    <property type="entry name" value="ARM-like"/>
</dbReference>
<dbReference type="InterPro" id="IPR016024">
    <property type="entry name" value="ARM-type_fold"/>
</dbReference>
<dbReference type="InterPro" id="IPR040000">
    <property type="entry name" value="NOP9"/>
</dbReference>
<dbReference type="InterPro" id="IPR001313">
    <property type="entry name" value="Pumilio_RNA-bd_rpt"/>
</dbReference>
<dbReference type="PANTHER" id="PTHR13102">
    <property type="entry name" value="NUCLEOLAR PROTEIN 9"/>
    <property type="match status" value="1"/>
</dbReference>
<dbReference type="PANTHER" id="PTHR13102:SF0">
    <property type="entry name" value="NUCLEOLAR PROTEIN 9"/>
    <property type="match status" value="1"/>
</dbReference>
<dbReference type="Pfam" id="PF22493">
    <property type="entry name" value="PUF_NOP9"/>
    <property type="match status" value="1"/>
</dbReference>
<dbReference type="SMART" id="SM00025">
    <property type="entry name" value="Pumilio"/>
    <property type="match status" value="6"/>
</dbReference>
<dbReference type="SUPFAM" id="SSF48371">
    <property type="entry name" value="ARM repeat"/>
    <property type="match status" value="2"/>
</dbReference>
<organism>
    <name type="scientific">Homo sapiens</name>
    <name type="common">Human</name>
    <dbReference type="NCBI Taxonomy" id="9606"/>
    <lineage>
        <taxon>Eukaryota</taxon>
        <taxon>Metazoa</taxon>
        <taxon>Chordata</taxon>
        <taxon>Craniata</taxon>
        <taxon>Vertebrata</taxon>
        <taxon>Euteleostomi</taxon>
        <taxon>Mammalia</taxon>
        <taxon>Eutheria</taxon>
        <taxon>Euarchontoglires</taxon>
        <taxon>Primates</taxon>
        <taxon>Haplorrhini</taxon>
        <taxon>Catarrhini</taxon>
        <taxon>Hominidae</taxon>
        <taxon>Homo</taxon>
    </lineage>
</organism>
<gene>
    <name type="primary">NOP9</name>
    <name type="synonym">C14orf21</name>
    <name type="synonym">KIAA2021</name>
</gene>
<name>NOP9_HUMAN</name>
<comment type="alternative products">
    <event type="alternative splicing"/>
    <isoform>
        <id>Q86U38-1</id>
        <name>1</name>
        <sequence type="displayed"/>
    </isoform>
    <isoform>
        <id>Q86U38-2</id>
        <name>2</name>
        <sequence type="described" ref="VSP_055693 VSP_055694"/>
    </isoform>
</comment>
<comment type="similarity">
    <text evidence="5">Belongs to the NOP9 family.</text>
</comment>
<comment type="sequence caution" evidence="5">
    <conflict type="erroneous initiation">
        <sequence resource="EMBL-CDS" id="BAC23117"/>
    </conflict>
    <text>Extended N-terminus.</text>
</comment>
<accession>Q86U38</accession>
<accession>A8MY76</accession>
<accession>Q8IVF0</accession>
<accession>Q8TBS6</accession>